<proteinExistence type="inferred from homology"/>
<name>HIS8_STAA8</name>
<sequence>MKEQLNQLSAYQPGLSPRALKEKYGIEGDLYKLASNENLYGPSPKVKEAISAHLDELYYYPETGSPTLKAAISKHLNVDQSRILFGAGLDEVILMISRAVLTPGDTIVTSEATFGQYYHNAIVESANVIQVPLKDGGFDLEGILKEVNEDTSLVWLCNPNNPTGTYFNHESLDSFLSQVPPHVPVIIDEAYFEFVTAEDYPDTLALQQKYDNAFLLRTFSKAYGLAGLRVGYVVASEHAIEKWNIIRPPFNVTRISEYAAVAALEDQQYLKEVTHKNSVERERFYQLPQSEYFLPSQTNFIFVKTKRVNELYEALLNVGCITRPFPTGVRITIGFKEQNDKMLEVLSNFKYE</sequence>
<gene>
    <name evidence="1" type="primary">hisC</name>
    <name type="ordered locus">SAOUHSC_00733</name>
</gene>
<reference key="1">
    <citation type="book" date="2006" name="Gram positive pathogens, 2nd edition">
        <title>The Staphylococcus aureus NCTC 8325 genome.</title>
        <editorList>
            <person name="Fischetti V."/>
            <person name="Novick R."/>
            <person name="Ferretti J."/>
            <person name="Portnoy D."/>
            <person name="Rood J."/>
        </editorList>
        <authorList>
            <person name="Gillaspy A.F."/>
            <person name="Worrell V."/>
            <person name="Orvis J."/>
            <person name="Roe B.A."/>
            <person name="Dyer D.W."/>
            <person name="Iandolo J.J."/>
        </authorList>
    </citation>
    <scope>NUCLEOTIDE SEQUENCE [LARGE SCALE GENOMIC DNA]</scope>
    <source>
        <strain>NCTC 8325 / PS 47</strain>
    </source>
</reference>
<feature type="chain" id="PRO_1000063505" description="Histidinol-phosphate aminotransferase">
    <location>
        <begin position="1"/>
        <end position="352"/>
    </location>
</feature>
<feature type="modified residue" description="N6-(pyridoxal phosphate)lysine" evidence="1">
    <location>
        <position position="221"/>
    </location>
</feature>
<comment type="catalytic activity">
    <reaction evidence="1">
        <text>L-histidinol phosphate + 2-oxoglutarate = 3-(imidazol-4-yl)-2-oxopropyl phosphate + L-glutamate</text>
        <dbReference type="Rhea" id="RHEA:23744"/>
        <dbReference type="ChEBI" id="CHEBI:16810"/>
        <dbReference type="ChEBI" id="CHEBI:29985"/>
        <dbReference type="ChEBI" id="CHEBI:57766"/>
        <dbReference type="ChEBI" id="CHEBI:57980"/>
        <dbReference type="EC" id="2.6.1.9"/>
    </reaction>
</comment>
<comment type="cofactor">
    <cofactor evidence="1">
        <name>pyridoxal 5'-phosphate</name>
        <dbReference type="ChEBI" id="CHEBI:597326"/>
    </cofactor>
</comment>
<comment type="pathway">
    <text evidence="1">Amino-acid biosynthesis; L-histidine biosynthesis; L-histidine from 5-phospho-alpha-D-ribose 1-diphosphate: step 7/9.</text>
</comment>
<comment type="subunit">
    <text evidence="1">Homodimer.</text>
</comment>
<comment type="similarity">
    <text evidence="1">Belongs to the class-II pyridoxal-phosphate-dependent aminotransferase family. Histidinol-phosphate aminotransferase subfamily.</text>
</comment>
<evidence type="ECO:0000255" key="1">
    <source>
        <dbReference type="HAMAP-Rule" id="MF_01023"/>
    </source>
</evidence>
<accession>Q2G087</accession>
<dbReference type="EC" id="2.6.1.9" evidence="1"/>
<dbReference type="EMBL" id="CP000253">
    <property type="protein sequence ID" value="ABD29866.1"/>
    <property type="molecule type" value="Genomic_DNA"/>
</dbReference>
<dbReference type="RefSeq" id="WP_000663030.1">
    <property type="nucleotide sequence ID" value="NZ_LS483365.1"/>
</dbReference>
<dbReference type="RefSeq" id="YP_499293.1">
    <property type="nucleotide sequence ID" value="NC_007795.1"/>
</dbReference>
<dbReference type="SMR" id="Q2G087"/>
<dbReference type="STRING" id="93061.SAOUHSC_00733"/>
<dbReference type="PaxDb" id="1280-SAXN108_0792"/>
<dbReference type="GeneID" id="3920978"/>
<dbReference type="KEGG" id="sao:SAOUHSC_00733"/>
<dbReference type="PATRIC" id="fig|93061.5.peg.662"/>
<dbReference type="eggNOG" id="COG0079">
    <property type="taxonomic scope" value="Bacteria"/>
</dbReference>
<dbReference type="HOGENOM" id="CLU_017584_3_3_9"/>
<dbReference type="OrthoDB" id="9813612at2"/>
<dbReference type="UniPathway" id="UPA00031">
    <property type="reaction ID" value="UER00012"/>
</dbReference>
<dbReference type="Proteomes" id="UP000008816">
    <property type="component" value="Chromosome"/>
</dbReference>
<dbReference type="GO" id="GO:0004400">
    <property type="term" value="F:histidinol-phosphate transaminase activity"/>
    <property type="evidence" value="ECO:0007669"/>
    <property type="project" value="UniProtKB-UniRule"/>
</dbReference>
<dbReference type="GO" id="GO:0030170">
    <property type="term" value="F:pyridoxal phosphate binding"/>
    <property type="evidence" value="ECO:0007669"/>
    <property type="project" value="InterPro"/>
</dbReference>
<dbReference type="GO" id="GO:0000105">
    <property type="term" value="P:L-histidine biosynthetic process"/>
    <property type="evidence" value="ECO:0007669"/>
    <property type="project" value="UniProtKB-UniRule"/>
</dbReference>
<dbReference type="CDD" id="cd00609">
    <property type="entry name" value="AAT_like"/>
    <property type="match status" value="1"/>
</dbReference>
<dbReference type="Gene3D" id="3.90.1150.10">
    <property type="entry name" value="Aspartate Aminotransferase, domain 1"/>
    <property type="match status" value="1"/>
</dbReference>
<dbReference type="Gene3D" id="3.40.640.10">
    <property type="entry name" value="Type I PLP-dependent aspartate aminotransferase-like (Major domain)"/>
    <property type="match status" value="1"/>
</dbReference>
<dbReference type="HAMAP" id="MF_01023">
    <property type="entry name" value="HisC_aminotrans_2"/>
    <property type="match status" value="1"/>
</dbReference>
<dbReference type="InterPro" id="IPR001917">
    <property type="entry name" value="Aminotrans_II_pyridoxalP_BS"/>
</dbReference>
<dbReference type="InterPro" id="IPR004839">
    <property type="entry name" value="Aminotransferase_I/II_large"/>
</dbReference>
<dbReference type="InterPro" id="IPR005861">
    <property type="entry name" value="HisP_aminotrans"/>
</dbReference>
<dbReference type="InterPro" id="IPR050106">
    <property type="entry name" value="HistidinolP_aminotransfase"/>
</dbReference>
<dbReference type="InterPro" id="IPR015424">
    <property type="entry name" value="PyrdxlP-dep_Trfase"/>
</dbReference>
<dbReference type="InterPro" id="IPR015421">
    <property type="entry name" value="PyrdxlP-dep_Trfase_major"/>
</dbReference>
<dbReference type="InterPro" id="IPR015422">
    <property type="entry name" value="PyrdxlP-dep_Trfase_small"/>
</dbReference>
<dbReference type="NCBIfam" id="TIGR01141">
    <property type="entry name" value="hisC"/>
    <property type="match status" value="1"/>
</dbReference>
<dbReference type="PANTHER" id="PTHR43643:SF3">
    <property type="entry name" value="HISTIDINOL-PHOSPHATE AMINOTRANSFERASE"/>
    <property type="match status" value="1"/>
</dbReference>
<dbReference type="PANTHER" id="PTHR43643">
    <property type="entry name" value="HISTIDINOL-PHOSPHATE AMINOTRANSFERASE 2"/>
    <property type="match status" value="1"/>
</dbReference>
<dbReference type="Pfam" id="PF00155">
    <property type="entry name" value="Aminotran_1_2"/>
    <property type="match status" value="1"/>
</dbReference>
<dbReference type="SUPFAM" id="SSF53383">
    <property type="entry name" value="PLP-dependent transferases"/>
    <property type="match status" value="1"/>
</dbReference>
<dbReference type="PROSITE" id="PS00599">
    <property type="entry name" value="AA_TRANSFER_CLASS_2"/>
    <property type="match status" value="1"/>
</dbReference>
<organism>
    <name type="scientific">Staphylococcus aureus (strain NCTC 8325 / PS 47)</name>
    <dbReference type="NCBI Taxonomy" id="93061"/>
    <lineage>
        <taxon>Bacteria</taxon>
        <taxon>Bacillati</taxon>
        <taxon>Bacillota</taxon>
        <taxon>Bacilli</taxon>
        <taxon>Bacillales</taxon>
        <taxon>Staphylococcaceae</taxon>
        <taxon>Staphylococcus</taxon>
    </lineage>
</organism>
<protein>
    <recommendedName>
        <fullName evidence="1">Histidinol-phosphate aminotransferase</fullName>
        <ecNumber evidence="1">2.6.1.9</ecNumber>
    </recommendedName>
    <alternativeName>
        <fullName evidence="1">Imidazole acetol-phosphate transaminase</fullName>
    </alternativeName>
</protein>
<keyword id="KW-0028">Amino-acid biosynthesis</keyword>
<keyword id="KW-0032">Aminotransferase</keyword>
<keyword id="KW-0368">Histidine biosynthesis</keyword>
<keyword id="KW-0663">Pyridoxal phosphate</keyword>
<keyword id="KW-1185">Reference proteome</keyword>
<keyword id="KW-0808">Transferase</keyword>